<dbReference type="EC" id="1.16.-.-" evidence="1"/>
<dbReference type="EMBL" id="CP000308">
    <property type="protein sequence ID" value="ABG13968.1"/>
    <property type="molecule type" value="Genomic_DNA"/>
</dbReference>
<dbReference type="RefSeq" id="WP_002210233.1">
    <property type="nucleotide sequence ID" value="NZ_CP009906.1"/>
</dbReference>
<dbReference type="SMR" id="Q1C6F4"/>
<dbReference type="GeneID" id="57976175"/>
<dbReference type="KEGG" id="ypa:YPA_2002"/>
<dbReference type="Proteomes" id="UP000001971">
    <property type="component" value="Chromosome"/>
</dbReference>
<dbReference type="GO" id="GO:0005737">
    <property type="term" value="C:cytoplasm"/>
    <property type="evidence" value="ECO:0007669"/>
    <property type="project" value="UniProtKB-SubCell"/>
</dbReference>
<dbReference type="GO" id="GO:0003677">
    <property type="term" value="F:DNA binding"/>
    <property type="evidence" value="ECO:0007669"/>
    <property type="project" value="UniProtKB-UniRule"/>
</dbReference>
<dbReference type="GO" id="GO:0008199">
    <property type="term" value="F:ferric iron binding"/>
    <property type="evidence" value="ECO:0007669"/>
    <property type="project" value="UniProtKB-UniRule"/>
</dbReference>
<dbReference type="GO" id="GO:0016722">
    <property type="term" value="F:oxidoreductase activity, acting on metal ions"/>
    <property type="evidence" value="ECO:0007669"/>
    <property type="project" value="InterPro"/>
</dbReference>
<dbReference type="GO" id="GO:0030261">
    <property type="term" value="P:chromosome condensation"/>
    <property type="evidence" value="ECO:0007669"/>
    <property type="project" value="UniProtKB-KW"/>
</dbReference>
<dbReference type="GO" id="GO:0006879">
    <property type="term" value="P:intracellular iron ion homeostasis"/>
    <property type="evidence" value="ECO:0007669"/>
    <property type="project" value="UniProtKB-KW"/>
</dbReference>
<dbReference type="CDD" id="cd01043">
    <property type="entry name" value="DPS"/>
    <property type="match status" value="1"/>
</dbReference>
<dbReference type="Gene3D" id="1.20.1260.10">
    <property type="match status" value="1"/>
</dbReference>
<dbReference type="HAMAP" id="MF_01441">
    <property type="entry name" value="Dps"/>
    <property type="match status" value="1"/>
</dbReference>
<dbReference type="InterPro" id="IPR002177">
    <property type="entry name" value="DPS_DNA-bd"/>
</dbReference>
<dbReference type="InterPro" id="IPR023188">
    <property type="entry name" value="DPS_DNA-bd_CS"/>
</dbReference>
<dbReference type="InterPro" id="IPR023067">
    <property type="entry name" value="Dps_gammaproteobac"/>
</dbReference>
<dbReference type="InterPro" id="IPR012347">
    <property type="entry name" value="Ferritin-like"/>
</dbReference>
<dbReference type="InterPro" id="IPR009078">
    <property type="entry name" value="Ferritin-like_SF"/>
</dbReference>
<dbReference type="InterPro" id="IPR008331">
    <property type="entry name" value="Ferritin_DPS_dom"/>
</dbReference>
<dbReference type="NCBIfam" id="NF006975">
    <property type="entry name" value="PRK09448.1"/>
    <property type="match status" value="1"/>
</dbReference>
<dbReference type="PANTHER" id="PTHR42932:SF3">
    <property type="entry name" value="DNA PROTECTION DURING STARVATION PROTEIN"/>
    <property type="match status" value="1"/>
</dbReference>
<dbReference type="PANTHER" id="PTHR42932">
    <property type="entry name" value="GENERAL STRESS PROTEIN 20U"/>
    <property type="match status" value="1"/>
</dbReference>
<dbReference type="Pfam" id="PF00210">
    <property type="entry name" value="Ferritin"/>
    <property type="match status" value="1"/>
</dbReference>
<dbReference type="PIRSF" id="PIRSF005900">
    <property type="entry name" value="Dps"/>
    <property type="match status" value="1"/>
</dbReference>
<dbReference type="PRINTS" id="PR01346">
    <property type="entry name" value="HELNAPAPROT"/>
</dbReference>
<dbReference type="SUPFAM" id="SSF47240">
    <property type="entry name" value="Ferritin-like"/>
    <property type="match status" value="1"/>
</dbReference>
<dbReference type="PROSITE" id="PS00818">
    <property type="entry name" value="DPS_1"/>
    <property type="match status" value="1"/>
</dbReference>
<accession>Q1C6F4</accession>
<keyword id="KW-0963">Cytoplasm</keyword>
<keyword id="KW-0226">DNA condensation</keyword>
<keyword id="KW-0238">DNA-binding</keyword>
<keyword id="KW-0408">Iron</keyword>
<keyword id="KW-0409">Iron storage</keyword>
<keyword id="KW-0479">Metal-binding</keyword>
<keyword id="KW-0560">Oxidoreductase</keyword>
<protein>
    <recommendedName>
        <fullName evidence="1">DNA protection during starvation protein</fullName>
        <ecNumber evidence="1">1.16.-.-</ecNumber>
    </recommendedName>
</protein>
<name>DPS_YERPA</name>
<gene>
    <name evidence="1" type="primary">dps</name>
    <name type="ordered locus">YPA_2002</name>
</gene>
<feature type="chain" id="PRO_0000271598" description="DNA protection during starvation protein">
    <location>
        <begin position="1"/>
        <end position="167"/>
    </location>
</feature>
<feature type="binding site" evidence="1">
    <location>
        <position position="51"/>
    </location>
    <ligand>
        <name>Fe cation</name>
        <dbReference type="ChEBI" id="CHEBI:24875"/>
    </ligand>
</feature>
<feature type="binding site" evidence="1">
    <location>
        <position position="78"/>
    </location>
    <ligand>
        <name>Fe cation</name>
        <dbReference type="ChEBI" id="CHEBI:24875"/>
    </ligand>
</feature>
<feature type="binding site" evidence="1">
    <location>
        <position position="82"/>
    </location>
    <ligand>
        <name>Fe cation</name>
        <dbReference type="ChEBI" id="CHEBI:24875"/>
    </ligand>
</feature>
<evidence type="ECO:0000255" key="1">
    <source>
        <dbReference type="HAMAP-Rule" id="MF_01441"/>
    </source>
</evidence>
<organism>
    <name type="scientific">Yersinia pestis bv. Antiqua (strain Antiqua)</name>
    <dbReference type="NCBI Taxonomy" id="360102"/>
    <lineage>
        <taxon>Bacteria</taxon>
        <taxon>Pseudomonadati</taxon>
        <taxon>Pseudomonadota</taxon>
        <taxon>Gammaproteobacteria</taxon>
        <taxon>Enterobacterales</taxon>
        <taxon>Yersiniaceae</taxon>
        <taxon>Yersinia</taxon>
    </lineage>
</organism>
<comment type="function">
    <text evidence="1">During stationary phase, binds the chromosome non-specifically, forming a highly ordered and stable dps-DNA co-crystal within which chromosomal DNA is condensed and protected from diverse damages. It protects DNA from oxidative damage by sequestering intracellular Fe(2+) ion and storing it in the form of Fe(3+) oxyhydroxide mineral, which can be released after reduction. One hydrogen peroxide oxidizes two Fe(2+) ions, which prevents hydroxyl radical production by the Fenton reaction.</text>
</comment>
<comment type="catalytic activity">
    <reaction evidence="1">
        <text>2 Fe(2+) + H2O2 + 2 H(+) = 2 Fe(3+) + 2 H2O</text>
        <dbReference type="Rhea" id="RHEA:48712"/>
        <dbReference type="ChEBI" id="CHEBI:15377"/>
        <dbReference type="ChEBI" id="CHEBI:15378"/>
        <dbReference type="ChEBI" id="CHEBI:16240"/>
        <dbReference type="ChEBI" id="CHEBI:29033"/>
        <dbReference type="ChEBI" id="CHEBI:29034"/>
    </reaction>
</comment>
<comment type="subunit">
    <text evidence="1">Homododecamer. The 12 subunits form a hollow sphere into which the mineral iron core of up to 500 Fe(3+) can be deposited.</text>
</comment>
<comment type="subcellular location">
    <subcellularLocation>
        <location evidence="1">Cytoplasm</location>
    </subcellularLocation>
</comment>
<comment type="similarity">
    <text evidence="1">Belongs to the Dps family.</text>
</comment>
<sequence length="167" mass="18871">MSTAKLVKTKPSELLYTRNDVEEHVKVATIKRLNQMVIQFIDLSLITKQAHWNMRGANFVAVHEMLDGFRTALTDHLDTFAERAVQLGGVALGTAQVINDKTPLKSYPTNIHSVQEHLKALAERYAIVANDIRKAITEVEDENSADMFTAASRDLDKFLWFIESNIE</sequence>
<proteinExistence type="inferred from homology"/>
<reference key="1">
    <citation type="journal article" date="2006" name="J. Bacteriol.">
        <title>Complete genome sequence of Yersinia pestis strains Antiqua and Nepal516: evidence of gene reduction in an emerging pathogen.</title>
        <authorList>
            <person name="Chain P.S.G."/>
            <person name="Hu P."/>
            <person name="Malfatti S.A."/>
            <person name="Radnedge L."/>
            <person name="Larimer F."/>
            <person name="Vergez L.M."/>
            <person name="Worsham P."/>
            <person name="Chu M.C."/>
            <person name="Andersen G.L."/>
        </authorList>
    </citation>
    <scope>NUCLEOTIDE SEQUENCE [LARGE SCALE GENOMIC DNA]</scope>
    <source>
        <strain>Antiqua</strain>
    </source>
</reference>